<protein>
    <recommendedName>
        <fullName>E3 ubiquitin-protein ligase SH3RF2</fullName>
        <ecNumber evidence="11">2.3.2.27</ecNumber>
    </recommendedName>
    <alternativeName>
        <fullName>Heart protein phosphatase 1-binding protein</fullName>
        <shortName>HEPP1</shortName>
    </alternativeName>
    <alternativeName>
        <fullName evidence="16">POSH-eliminating RING protein</fullName>
    </alternativeName>
    <alternativeName>
        <fullName>Protein phosphatase 1 regulatory subunit 39</fullName>
    </alternativeName>
    <alternativeName>
        <fullName>RING finger protein 158</fullName>
    </alternativeName>
    <alternativeName>
        <fullName evidence="17">RING-type E3 ubiquitin transferase SH3RF2</fullName>
    </alternativeName>
    <alternativeName>
        <fullName>SH3 domain-containing RING finger protein 2</fullName>
    </alternativeName>
</protein>
<feature type="chain" id="PRO_0000269512" description="E3 ubiquitin-protein ligase SH3RF2">
    <location>
        <begin position="1"/>
        <end position="729"/>
    </location>
</feature>
<feature type="domain" description="SH3 1" evidence="3">
    <location>
        <begin position="125"/>
        <end position="184"/>
    </location>
</feature>
<feature type="domain" description="SH3 2" evidence="3">
    <location>
        <begin position="187"/>
        <end position="252"/>
    </location>
</feature>
<feature type="domain" description="SH3 3" evidence="3">
    <location>
        <begin position="380"/>
        <end position="441"/>
    </location>
</feature>
<feature type="zinc finger region" description="RING-type" evidence="2">
    <location>
        <begin position="12"/>
        <end position="53"/>
    </location>
</feature>
<feature type="region of interest" description="Disordered" evidence="4">
    <location>
        <begin position="78"/>
        <end position="105"/>
    </location>
</feature>
<feature type="region of interest" description="Disordered" evidence="4">
    <location>
        <begin position="258"/>
        <end position="297"/>
    </location>
</feature>
<feature type="region of interest" description="Interaction with PAK4" evidence="11">
    <location>
        <begin position="370"/>
        <end position="459"/>
    </location>
</feature>
<feature type="region of interest" description="Disordered" evidence="4">
    <location>
        <begin position="497"/>
        <end position="526"/>
    </location>
</feature>
<feature type="region of interest" description="Disordered" evidence="4">
    <location>
        <begin position="610"/>
        <end position="677"/>
    </location>
</feature>
<feature type="region of interest" description="Interaction with PPP1CA">
    <location>
        <begin position="641"/>
        <end position="646"/>
    </location>
</feature>
<feature type="compositionally biased region" description="Polar residues" evidence="4">
    <location>
        <begin position="263"/>
        <end position="285"/>
    </location>
</feature>
<feature type="compositionally biased region" description="Polar residues" evidence="4">
    <location>
        <begin position="517"/>
        <end position="526"/>
    </location>
</feature>
<feature type="modified residue" description="Phosphoserine" evidence="1">
    <location>
        <position position="649"/>
    </location>
</feature>
<feature type="splice variant" id="VSP_040662" description="In isoform 3." evidence="14">
    <location>
        <begin position="1"/>
        <end position="543"/>
    </location>
</feature>
<feature type="splice variant" id="VSP_022058" description="In isoform 2." evidence="12 13">
    <location>
        <begin position="1"/>
        <end position="508"/>
    </location>
</feature>
<feature type="splice variant" id="VSP_022059" description="In isoform 2." evidence="12 13">
    <original>LRKGRSSMRKN</original>
    <variation>MRKSKWWQRD</variation>
    <location>
        <begin position="509"/>
        <end position="519"/>
    </location>
</feature>
<feature type="sequence variant" id="VAR_052118" description="In dbSNP:rs34739859.">
    <original>F</original>
    <variation>S</variation>
    <location>
        <position position="16"/>
    </location>
</feature>
<feature type="sequence variant" id="VAR_052119" description="In dbSNP:rs34942619.">
    <original>F</original>
    <variation>V</variation>
    <location>
        <position position="174"/>
    </location>
</feature>
<feature type="sequence variant" id="VAR_029788" description="In dbSNP:rs758037." evidence="5 6">
    <original>R</original>
    <variation>C</variation>
    <location>
        <position position="267"/>
    </location>
</feature>
<feature type="sequence variant" id="VAR_052120" description="In dbSNP:rs35165046.">
    <original>R</original>
    <variation>Q</variation>
    <location>
        <position position="477"/>
    </location>
</feature>
<feature type="sequence variant" id="VAR_029789" description="In dbSNP:rs2962525." evidence="5 6">
    <original>W</original>
    <variation>R</variation>
    <location>
        <position position="592"/>
    </location>
</feature>
<feature type="sequence variant" id="VAR_029790" description="In dbSNP:rs11435." evidence="5">
    <original>V</original>
    <variation>I</variation>
    <location>
        <position position="687"/>
    </location>
</feature>
<feature type="sequence variant" id="VAR_029791" description="In dbSNP:rs1056149." evidence="5 6">
    <original>G</original>
    <variation>A</variation>
    <location>
        <position position="710"/>
    </location>
</feature>
<feature type="mutagenesis site" description="Significant loss of interaction with PPP1CA. Significant loss of interaction with PPP1CA; when associated with G-645." evidence="9">
    <original>V</original>
    <variation>G</variation>
    <location>
        <position position="643"/>
    </location>
</feature>
<feature type="mutagenesis site" description="Significant loss of interaction with PPP1CA. Significant loss of interaction with PPP1CA; when associated with G-643." evidence="9">
    <original>F</original>
    <variation>G</variation>
    <location>
        <position position="645"/>
    </location>
</feature>
<feature type="sequence conflict" description="In Ref. 2; BAB85025." evidence="17" ref="2">
    <original>K</original>
    <variation>R</variation>
    <location>
        <position position="148"/>
    </location>
</feature>
<feature type="sequence conflict" description="In Ref. 2; BAB85025." evidence="17" ref="2">
    <original>N</original>
    <variation>S</variation>
    <location>
        <position position="168"/>
    </location>
</feature>
<keyword id="KW-0025">Alternative splicing</keyword>
<keyword id="KW-0479">Metal-binding</keyword>
<keyword id="KW-0539">Nucleus</keyword>
<keyword id="KW-0597">Phosphoprotein</keyword>
<keyword id="KW-0650">Protein phosphatase inhibitor</keyword>
<keyword id="KW-1267">Proteomics identification</keyword>
<keyword id="KW-1185">Reference proteome</keyword>
<keyword id="KW-0677">Repeat</keyword>
<keyword id="KW-0728">SH3 domain</keyword>
<keyword id="KW-0808">Transferase</keyword>
<keyword id="KW-0832">Ubl conjugation</keyword>
<keyword id="KW-0833">Ubl conjugation pathway</keyword>
<keyword id="KW-0862">Zinc</keyword>
<keyword id="KW-0863">Zinc-finger</keyword>
<dbReference type="EC" id="2.3.2.27" evidence="11"/>
<dbReference type="EMBL" id="AK058046">
    <property type="protein sequence ID" value="BAB71639.1"/>
    <property type="molecule type" value="mRNA"/>
</dbReference>
<dbReference type="EMBL" id="AK074234">
    <property type="protein sequence ID" value="BAB85025.1"/>
    <property type="status" value="ALT_TERM"/>
    <property type="molecule type" value="mRNA"/>
</dbReference>
<dbReference type="EMBL" id="AK292576">
    <property type="protein sequence ID" value="BAF85265.1"/>
    <property type="molecule type" value="mRNA"/>
</dbReference>
<dbReference type="EMBL" id="AC005216">
    <property type="status" value="NOT_ANNOTATED_CDS"/>
    <property type="molecule type" value="Genomic_DNA"/>
</dbReference>
<dbReference type="EMBL" id="AC005351">
    <property type="status" value="NOT_ANNOTATED_CDS"/>
    <property type="molecule type" value="Genomic_DNA"/>
</dbReference>
<dbReference type="EMBL" id="AC011359">
    <property type="status" value="NOT_ANNOTATED_CDS"/>
    <property type="molecule type" value="Genomic_DNA"/>
</dbReference>
<dbReference type="EMBL" id="AC091887">
    <property type="status" value="NOT_ANNOTATED_CDS"/>
    <property type="molecule type" value="Genomic_DNA"/>
</dbReference>
<dbReference type="EMBL" id="BC031650">
    <property type="protein sequence ID" value="AAH31650.2"/>
    <property type="status" value="ALT_INIT"/>
    <property type="molecule type" value="mRNA"/>
</dbReference>
<dbReference type="EMBL" id="BC073914">
    <property type="protein sequence ID" value="AAH73914.1"/>
    <property type="molecule type" value="mRNA"/>
</dbReference>
<dbReference type="EMBL" id="BC125106">
    <property type="protein sequence ID" value="AAI25107.1"/>
    <property type="molecule type" value="mRNA"/>
</dbReference>
<dbReference type="CCDS" id="CCDS4280.1">
    <molecule id="Q8TEC5-1"/>
</dbReference>
<dbReference type="RefSeq" id="NP_689763.3">
    <molecule id="Q8TEC5-1"/>
    <property type="nucleotide sequence ID" value="NM_152550.3"/>
</dbReference>
<dbReference type="RefSeq" id="XP_006714820.1">
    <molecule id="Q8TEC5-1"/>
    <property type="nucleotide sequence ID" value="XM_006714757.2"/>
</dbReference>
<dbReference type="RefSeq" id="XP_011535871.1">
    <property type="nucleotide sequence ID" value="XM_011537569.2"/>
</dbReference>
<dbReference type="RefSeq" id="XP_016864625.1">
    <molecule id="Q8TEC5-1"/>
    <property type="nucleotide sequence ID" value="XM_017009136.2"/>
</dbReference>
<dbReference type="SMR" id="Q8TEC5"/>
<dbReference type="BioGRID" id="127517">
    <property type="interactions" value="57"/>
</dbReference>
<dbReference type="FunCoup" id="Q8TEC5">
    <property type="interactions" value="1382"/>
</dbReference>
<dbReference type="IntAct" id="Q8TEC5">
    <property type="interactions" value="25"/>
</dbReference>
<dbReference type="STRING" id="9606.ENSP00000424497"/>
<dbReference type="GlyGen" id="Q8TEC5">
    <property type="glycosylation" value="1 site, 1 O-linked glycan (1 site)"/>
</dbReference>
<dbReference type="iPTMnet" id="Q8TEC5"/>
<dbReference type="PhosphoSitePlus" id="Q8TEC5"/>
<dbReference type="BioMuta" id="SH3RF2"/>
<dbReference type="DMDM" id="296452957"/>
<dbReference type="jPOST" id="Q8TEC5"/>
<dbReference type="MassIVE" id="Q8TEC5"/>
<dbReference type="PaxDb" id="9606-ENSP00000424497"/>
<dbReference type="PeptideAtlas" id="Q8TEC5"/>
<dbReference type="ProteomicsDB" id="74443">
    <molecule id="Q8TEC5-1"/>
</dbReference>
<dbReference type="ProteomicsDB" id="74444">
    <molecule id="Q8TEC5-2"/>
</dbReference>
<dbReference type="ProteomicsDB" id="74445">
    <molecule id="Q8TEC5-3"/>
</dbReference>
<dbReference type="TopDownProteomics" id="Q8TEC5-1">
    <molecule id="Q8TEC5-1"/>
</dbReference>
<dbReference type="Antibodypedia" id="27503">
    <property type="antibodies" value="135 antibodies from 25 providers"/>
</dbReference>
<dbReference type="DNASU" id="153769"/>
<dbReference type="Ensembl" id="ENST00000359120.9">
    <molecule id="Q8TEC5-1"/>
    <property type="protein sequence ID" value="ENSP00000352028.4"/>
    <property type="gene ID" value="ENSG00000156463.18"/>
</dbReference>
<dbReference type="Ensembl" id="ENST00000511217.1">
    <molecule id="Q8TEC5-1"/>
    <property type="protein sequence ID" value="ENSP00000424497.1"/>
    <property type="gene ID" value="ENSG00000156463.18"/>
</dbReference>
<dbReference type="GeneID" id="153769"/>
<dbReference type="KEGG" id="hsa:153769"/>
<dbReference type="MANE-Select" id="ENST00000359120.9">
    <property type="protein sequence ID" value="ENSP00000352028.4"/>
    <property type="RefSeq nucleotide sequence ID" value="NM_152550.4"/>
    <property type="RefSeq protein sequence ID" value="NP_689763.4"/>
</dbReference>
<dbReference type="UCSC" id="uc003lnt.4">
    <molecule id="Q8TEC5-1"/>
    <property type="organism name" value="human"/>
</dbReference>
<dbReference type="AGR" id="HGNC:26299"/>
<dbReference type="CTD" id="153769"/>
<dbReference type="DisGeNET" id="153769"/>
<dbReference type="GeneCards" id="SH3RF2"/>
<dbReference type="HGNC" id="HGNC:26299">
    <property type="gene designation" value="SH3RF2"/>
</dbReference>
<dbReference type="HPA" id="ENSG00000156463">
    <property type="expression patterns" value="Tissue enhanced (heart muscle, skeletal muscle, skin)"/>
</dbReference>
<dbReference type="MIM" id="613377">
    <property type="type" value="gene"/>
</dbReference>
<dbReference type="neXtProt" id="NX_Q8TEC5"/>
<dbReference type="OpenTargets" id="ENSG00000156463"/>
<dbReference type="PharmGKB" id="PA134944983"/>
<dbReference type="VEuPathDB" id="HostDB:ENSG00000156463"/>
<dbReference type="eggNOG" id="KOG2177">
    <property type="taxonomic scope" value="Eukaryota"/>
</dbReference>
<dbReference type="GeneTree" id="ENSGT00940000160067"/>
<dbReference type="HOGENOM" id="CLU_015769_2_0_1"/>
<dbReference type="InParanoid" id="Q8TEC5"/>
<dbReference type="OMA" id="PRLHMEG"/>
<dbReference type="OrthoDB" id="2163411at2759"/>
<dbReference type="PAN-GO" id="Q8TEC5">
    <property type="GO annotations" value="7 GO annotations based on evolutionary models"/>
</dbReference>
<dbReference type="PhylomeDB" id="Q8TEC5"/>
<dbReference type="TreeFam" id="TF105571"/>
<dbReference type="PathwayCommons" id="Q8TEC5"/>
<dbReference type="SignaLink" id="Q8TEC5"/>
<dbReference type="SIGNOR" id="Q8TEC5"/>
<dbReference type="UniPathway" id="UPA00143"/>
<dbReference type="BioGRID-ORCS" id="153769">
    <property type="hits" value="40 hits in 1191 CRISPR screens"/>
</dbReference>
<dbReference type="ChiTaRS" id="SH3RF2">
    <property type="organism name" value="human"/>
</dbReference>
<dbReference type="GenomeRNAi" id="153769"/>
<dbReference type="Pharos" id="Q8TEC5">
    <property type="development level" value="Tbio"/>
</dbReference>
<dbReference type="PRO" id="PR:Q8TEC5"/>
<dbReference type="Proteomes" id="UP000005640">
    <property type="component" value="Chromosome 5"/>
</dbReference>
<dbReference type="RNAct" id="Q8TEC5">
    <property type="molecule type" value="protein"/>
</dbReference>
<dbReference type="Bgee" id="ENSG00000156463">
    <property type="expression patterns" value="Expressed in left ventricle myocardium and 140 other cell types or tissues"/>
</dbReference>
<dbReference type="GO" id="GO:0005654">
    <property type="term" value="C:nucleoplasm"/>
    <property type="evidence" value="ECO:0000314"/>
    <property type="project" value="HPA"/>
</dbReference>
<dbReference type="GO" id="GO:0005634">
    <property type="term" value="C:nucleus"/>
    <property type="evidence" value="ECO:0000314"/>
    <property type="project" value="UniProtKB"/>
</dbReference>
<dbReference type="GO" id="GO:0019902">
    <property type="term" value="F:phosphatase binding"/>
    <property type="evidence" value="ECO:0000314"/>
    <property type="project" value="UniProtKB"/>
</dbReference>
<dbReference type="GO" id="GO:0008157">
    <property type="term" value="F:protein phosphatase 1 binding"/>
    <property type="evidence" value="ECO:0000314"/>
    <property type="project" value="UniProtKB"/>
</dbReference>
<dbReference type="GO" id="GO:0004864">
    <property type="term" value="F:protein phosphatase inhibitor activity"/>
    <property type="evidence" value="ECO:0007669"/>
    <property type="project" value="UniProtKB-KW"/>
</dbReference>
<dbReference type="GO" id="GO:0061630">
    <property type="term" value="F:ubiquitin protein ligase activity"/>
    <property type="evidence" value="ECO:0000315"/>
    <property type="project" value="UniProtKB"/>
</dbReference>
<dbReference type="GO" id="GO:0008270">
    <property type="term" value="F:zinc ion binding"/>
    <property type="evidence" value="ECO:0007669"/>
    <property type="project" value="UniProtKB-KW"/>
</dbReference>
<dbReference type="GO" id="GO:0043066">
    <property type="term" value="P:negative regulation of apoptotic process"/>
    <property type="evidence" value="ECO:0000315"/>
    <property type="project" value="UniProtKB"/>
</dbReference>
<dbReference type="GO" id="GO:0046329">
    <property type="term" value="P:negative regulation of JNK cascade"/>
    <property type="evidence" value="ECO:0000250"/>
    <property type="project" value="UniProtKB"/>
</dbReference>
<dbReference type="GO" id="GO:0031397">
    <property type="term" value="P:negative regulation of protein ubiquitination"/>
    <property type="evidence" value="ECO:0000315"/>
    <property type="project" value="UniProtKB"/>
</dbReference>
<dbReference type="GO" id="GO:0030335">
    <property type="term" value="P:positive regulation of cell migration"/>
    <property type="evidence" value="ECO:0000315"/>
    <property type="project" value="UniProtKB"/>
</dbReference>
<dbReference type="GO" id="GO:0046330">
    <property type="term" value="P:positive regulation of JNK cascade"/>
    <property type="evidence" value="ECO:0000315"/>
    <property type="project" value="UniProtKB"/>
</dbReference>
<dbReference type="GO" id="GO:0032436">
    <property type="term" value="P:positive regulation of proteasomal ubiquitin-dependent protein catabolic process"/>
    <property type="evidence" value="ECO:0000315"/>
    <property type="project" value="UniProtKB"/>
</dbReference>
<dbReference type="GO" id="GO:0051865">
    <property type="term" value="P:protein autoubiquitination"/>
    <property type="evidence" value="ECO:0000315"/>
    <property type="project" value="UniProtKB"/>
</dbReference>
<dbReference type="GO" id="GO:0016567">
    <property type="term" value="P:protein ubiquitination"/>
    <property type="evidence" value="ECO:0000318"/>
    <property type="project" value="GO_Central"/>
</dbReference>
<dbReference type="CDD" id="cd16749">
    <property type="entry name" value="RING-HC_SH3RF2"/>
    <property type="match status" value="1"/>
</dbReference>
<dbReference type="CDD" id="cd11929">
    <property type="entry name" value="SH3_SH3RF2_1"/>
    <property type="match status" value="1"/>
</dbReference>
<dbReference type="CDD" id="cd11932">
    <property type="entry name" value="SH3_SH3RF2_2"/>
    <property type="match status" value="1"/>
</dbReference>
<dbReference type="CDD" id="cd11784">
    <property type="entry name" value="SH3_SH3RF2_3"/>
    <property type="match status" value="1"/>
</dbReference>
<dbReference type="FunFam" id="3.30.40.10:FF:000077">
    <property type="entry name" value="E3 ubiquitin-protein ligase SH3RF1 isoform X1"/>
    <property type="match status" value="1"/>
</dbReference>
<dbReference type="FunFam" id="2.30.30.40:FF:000173">
    <property type="entry name" value="E3 ubiquitin-protein ligase SH3RF2 isoform X1"/>
    <property type="match status" value="1"/>
</dbReference>
<dbReference type="FunFam" id="2.30.30.40:FF:000191">
    <property type="entry name" value="E3 ubiquitin-protein ligase SH3RF2 isoform X2"/>
    <property type="match status" value="1"/>
</dbReference>
<dbReference type="FunFam" id="2.30.30.40:FF:000063">
    <property type="entry name" value="Putative E3 ubiquitin-protein ligase SH3RF1"/>
    <property type="match status" value="1"/>
</dbReference>
<dbReference type="Gene3D" id="2.30.30.40">
    <property type="entry name" value="SH3 Domains"/>
    <property type="match status" value="3"/>
</dbReference>
<dbReference type="Gene3D" id="3.30.40.10">
    <property type="entry name" value="Zinc/RING finger domain, C3HC4 (zinc finger)"/>
    <property type="match status" value="1"/>
</dbReference>
<dbReference type="InterPro" id="IPR050384">
    <property type="entry name" value="Endophilin_SH3RF"/>
</dbReference>
<dbReference type="InterPro" id="IPR036028">
    <property type="entry name" value="SH3-like_dom_sf"/>
</dbReference>
<dbReference type="InterPro" id="IPR001452">
    <property type="entry name" value="SH3_domain"/>
</dbReference>
<dbReference type="InterPro" id="IPR028511">
    <property type="entry name" value="SH3RF2_RING-HC_Zfn"/>
</dbReference>
<dbReference type="InterPro" id="IPR035792">
    <property type="entry name" value="SH3RF2_SH3_1"/>
</dbReference>
<dbReference type="InterPro" id="IPR035794">
    <property type="entry name" value="SH3RF2_SH3_2"/>
</dbReference>
<dbReference type="InterPro" id="IPR035822">
    <property type="entry name" value="SH3RF2_SH3_3"/>
</dbReference>
<dbReference type="InterPro" id="IPR001841">
    <property type="entry name" value="Znf_RING"/>
</dbReference>
<dbReference type="InterPro" id="IPR013083">
    <property type="entry name" value="Znf_RING/FYVE/PHD"/>
</dbReference>
<dbReference type="InterPro" id="IPR017907">
    <property type="entry name" value="Znf_RING_CS"/>
</dbReference>
<dbReference type="PANTHER" id="PTHR14167:SF60">
    <property type="entry name" value="E3 UBIQUITIN-PROTEIN LIGASE SH3RF2"/>
    <property type="match status" value="1"/>
</dbReference>
<dbReference type="PANTHER" id="PTHR14167">
    <property type="entry name" value="SH3 DOMAIN-CONTAINING"/>
    <property type="match status" value="1"/>
</dbReference>
<dbReference type="Pfam" id="PF00018">
    <property type="entry name" value="SH3_1"/>
    <property type="match status" value="1"/>
</dbReference>
<dbReference type="Pfam" id="PF07653">
    <property type="entry name" value="SH3_2"/>
    <property type="match status" value="1"/>
</dbReference>
<dbReference type="Pfam" id="PF14604">
    <property type="entry name" value="SH3_9"/>
    <property type="match status" value="1"/>
</dbReference>
<dbReference type="Pfam" id="PF13639">
    <property type="entry name" value="zf-RING_2"/>
    <property type="match status" value="1"/>
</dbReference>
<dbReference type="PRINTS" id="PR00452">
    <property type="entry name" value="SH3DOMAIN"/>
</dbReference>
<dbReference type="SMART" id="SM00184">
    <property type="entry name" value="RING"/>
    <property type="match status" value="1"/>
</dbReference>
<dbReference type="SMART" id="SM00326">
    <property type="entry name" value="SH3"/>
    <property type="match status" value="3"/>
</dbReference>
<dbReference type="SUPFAM" id="SSF57850">
    <property type="entry name" value="RING/U-box"/>
    <property type="match status" value="1"/>
</dbReference>
<dbReference type="SUPFAM" id="SSF50044">
    <property type="entry name" value="SH3-domain"/>
    <property type="match status" value="3"/>
</dbReference>
<dbReference type="PROSITE" id="PS50002">
    <property type="entry name" value="SH3"/>
    <property type="match status" value="3"/>
</dbReference>
<dbReference type="PROSITE" id="PS00518">
    <property type="entry name" value="ZF_RING_1"/>
    <property type="match status" value="1"/>
</dbReference>
<dbReference type="PROSITE" id="PS50089">
    <property type="entry name" value="ZF_RING_2"/>
    <property type="match status" value="1"/>
</dbReference>
<reference key="1">
    <citation type="journal article" date="2010" name="Biochem. Biophys. Res. Commun.">
        <title>FLJ23654 encodes a heart protein phosphatase 1-binding protein (Hepp1).</title>
        <authorList>
            <person name="Chen C.Y."/>
            <person name="Lai N.S."/>
            <person name="Yang J.J."/>
            <person name="Huang H.L."/>
            <person name="Hung W.C."/>
            <person name="Li C."/>
            <person name="Lin T.H."/>
            <person name="Huang H.B."/>
        </authorList>
    </citation>
    <scope>NUCLEOTIDE SEQUENCE [MRNA] (ISOFORM 3)</scope>
    <scope>FUNCTION</scope>
    <scope>INTERACTION WITH PPP1CA</scope>
    <scope>TISSUE SPECIFICITY</scope>
    <scope>MUTAGENESIS OF VAL-643 AND PHE-645</scope>
</reference>
<reference key="2">
    <citation type="journal article" date="2004" name="Nat. Genet.">
        <title>Complete sequencing and characterization of 21,243 full-length human cDNAs.</title>
        <authorList>
            <person name="Ota T."/>
            <person name="Suzuki Y."/>
            <person name="Nishikawa T."/>
            <person name="Otsuki T."/>
            <person name="Sugiyama T."/>
            <person name="Irie R."/>
            <person name="Wakamatsu A."/>
            <person name="Hayashi K."/>
            <person name="Sato H."/>
            <person name="Nagai K."/>
            <person name="Kimura K."/>
            <person name="Makita H."/>
            <person name="Sekine M."/>
            <person name="Obayashi M."/>
            <person name="Nishi T."/>
            <person name="Shibahara T."/>
            <person name="Tanaka T."/>
            <person name="Ishii S."/>
            <person name="Yamamoto J."/>
            <person name="Saito K."/>
            <person name="Kawai Y."/>
            <person name="Isono Y."/>
            <person name="Nakamura Y."/>
            <person name="Nagahari K."/>
            <person name="Murakami K."/>
            <person name="Yasuda T."/>
            <person name="Iwayanagi T."/>
            <person name="Wagatsuma M."/>
            <person name="Shiratori A."/>
            <person name="Sudo H."/>
            <person name="Hosoiri T."/>
            <person name="Kaku Y."/>
            <person name="Kodaira H."/>
            <person name="Kondo H."/>
            <person name="Sugawara M."/>
            <person name="Takahashi M."/>
            <person name="Kanda K."/>
            <person name="Yokoi T."/>
            <person name="Furuya T."/>
            <person name="Kikkawa E."/>
            <person name="Omura Y."/>
            <person name="Abe K."/>
            <person name="Kamihara K."/>
            <person name="Katsuta N."/>
            <person name="Sato K."/>
            <person name="Tanikawa M."/>
            <person name="Yamazaki M."/>
            <person name="Ninomiya K."/>
            <person name="Ishibashi T."/>
            <person name="Yamashita H."/>
            <person name="Murakawa K."/>
            <person name="Fujimori K."/>
            <person name="Tanai H."/>
            <person name="Kimata M."/>
            <person name="Watanabe M."/>
            <person name="Hiraoka S."/>
            <person name="Chiba Y."/>
            <person name="Ishida S."/>
            <person name="Ono Y."/>
            <person name="Takiguchi S."/>
            <person name="Watanabe S."/>
            <person name="Yosida M."/>
            <person name="Hotuta T."/>
            <person name="Kusano J."/>
            <person name="Kanehori K."/>
            <person name="Takahashi-Fujii A."/>
            <person name="Hara H."/>
            <person name="Tanase T.-O."/>
            <person name="Nomura Y."/>
            <person name="Togiya S."/>
            <person name="Komai F."/>
            <person name="Hara R."/>
            <person name="Takeuchi K."/>
            <person name="Arita M."/>
            <person name="Imose N."/>
            <person name="Musashino K."/>
            <person name="Yuuki H."/>
            <person name="Oshima A."/>
            <person name="Sasaki N."/>
            <person name="Aotsuka S."/>
            <person name="Yoshikawa Y."/>
            <person name="Matsunawa H."/>
            <person name="Ichihara T."/>
            <person name="Shiohata N."/>
            <person name="Sano S."/>
            <person name="Moriya S."/>
            <person name="Momiyama H."/>
            <person name="Satoh N."/>
            <person name="Takami S."/>
            <person name="Terashima Y."/>
            <person name="Suzuki O."/>
            <person name="Nakagawa S."/>
            <person name="Senoh A."/>
            <person name="Mizoguchi H."/>
            <person name="Goto Y."/>
            <person name="Shimizu F."/>
            <person name="Wakebe H."/>
            <person name="Hishigaki H."/>
            <person name="Watanabe T."/>
            <person name="Sugiyama A."/>
            <person name="Takemoto M."/>
            <person name="Kawakami B."/>
            <person name="Yamazaki M."/>
            <person name="Watanabe K."/>
            <person name="Kumagai A."/>
            <person name="Itakura S."/>
            <person name="Fukuzumi Y."/>
            <person name="Fujimori Y."/>
            <person name="Komiyama M."/>
            <person name="Tashiro H."/>
            <person name="Tanigami A."/>
            <person name="Fujiwara T."/>
            <person name="Ono T."/>
            <person name="Yamada K."/>
            <person name="Fujii Y."/>
            <person name="Ozaki K."/>
            <person name="Hirao M."/>
            <person name="Ohmori Y."/>
            <person name="Kawabata A."/>
            <person name="Hikiji T."/>
            <person name="Kobatake N."/>
            <person name="Inagaki H."/>
            <person name="Ikema Y."/>
            <person name="Okamoto S."/>
            <person name="Okitani R."/>
            <person name="Kawakami T."/>
            <person name="Noguchi S."/>
            <person name="Itoh T."/>
            <person name="Shigeta K."/>
            <person name="Senba T."/>
            <person name="Matsumura K."/>
            <person name="Nakajima Y."/>
            <person name="Mizuno T."/>
            <person name="Morinaga M."/>
            <person name="Sasaki M."/>
            <person name="Togashi T."/>
            <person name="Oyama M."/>
            <person name="Hata H."/>
            <person name="Watanabe M."/>
            <person name="Komatsu T."/>
            <person name="Mizushima-Sugano J."/>
            <person name="Satoh T."/>
            <person name="Shirai Y."/>
            <person name="Takahashi Y."/>
            <person name="Nakagawa K."/>
            <person name="Okumura K."/>
            <person name="Nagase T."/>
            <person name="Nomura N."/>
            <person name="Kikuchi H."/>
            <person name="Masuho Y."/>
            <person name="Yamashita R."/>
            <person name="Nakai K."/>
            <person name="Yada T."/>
            <person name="Nakamura Y."/>
            <person name="Ohara O."/>
            <person name="Isogai T."/>
            <person name="Sugano S."/>
        </authorList>
    </citation>
    <scope>NUCLEOTIDE SEQUENCE [LARGE SCALE MRNA] (ISOFORMS 1 AND 2)</scope>
    <scope>VARIANTS CYS-267; ARG-592; ILE-687 AND ALA-710</scope>
    <source>
        <tissue>Colon</tissue>
        <tissue>Testis</tissue>
    </source>
</reference>
<reference key="3">
    <citation type="journal article" date="2004" name="Nature">
        <title>The DNA sequence and comparative analysis of human chromosome 5.</title>
        <authorList>
            <person name="Schmutz J."/>
            <person name="Martin J."/>
            <person name="Terry A."/>
            <person name="Couronne O."/>
            <person name="Grimwood J."/>
            <person name="Lowry S."/>
            <person name="Gordon L.A."/>
            <person name="Scott D."/>
            <person name="Xie G."/>
            <person name="Huang W."/>
            <person name="Hellsten U."/>
            <person name="Tran-Gyamfi M."/>
            <person name="She X."/>
            <person name="Prabhakar S."/>
            <person name="Aerts A."/>
            <person name="Altherr M."/>
            <person name="Bajorek E."/>
            <person name="Black S."/>
            <person name="Branscomb E."/>
            <person name="Caoile C."/>
            <person name="Challacombe J.F."/>
            <person name="Chan Y.M."/>
            <person name="Denys M."/>
            <person name="Detter J.C."/>
            <person name="Escobar J."/>
            <person name="Flowers D."/>
            <person name="Fotopulos D."/>
            <person name="Glavina T."/>
            <person name="Gomez M."/>
            <person name="Gonzales E."/>
            <person name="Goodstein D."/>
            <person name="Grigoriev I."/>
            <person name="Groza M."/>
            <person name="Hammon N."/>
            <person name="Hawkins T."/>
            <person name="Haydu L."/>
            <person name="Israni S."/>
            <person name="Jett J."/>
            <person name="Kadner K."/>
            <person name="Kimball H."/>
            <person name="Kobayashi A."/>
            <person name="Lopez F."/>
            <person name="Lou Y."/>
            <person name="Martinez D."/>
            <person name="Medina C."/>
            <person name="Morgan J."/>
            <person name="Nandkeshwar R."/>
            <person name="Noonan J.P."/>
            <person name="Pitluck S."/>
            <person name="Pollard M."/>
            <person name="Predki P."/>
            <person name="Priest J."/>
            <person name="Ramirez L."/>
            <person name="Retterer J."/>
            <person name="Rodriguez A."/>
            <person name="Rogers S."/>
            <person name="Salamov A."/>
            <person name="Salazar A."/>
            <person name="Thayer N."/>
            <person name="Tice H."/>
            <person name="Tsai M."/>
            <person name="Ustaszewska A."/>
            <person name="Vo N."/>
            <person name="Wheeler J."/>
            <person name="Wu K."/>
            <person name="Yang J."/>
            <person name="Dickson M."/>
            <person name="Cheng J.-F."/>
            <person name="Eichler E.E."/>
            <person name="Olsen A."/>
            <person name="Pennacchio L.A."/>
            <person name="Rokhsar D.S."/>
            <person name="Richardson P."/>
            <person name="Lucas S.M."/>
            <person name="Myers R.M."/>
            <person name="Rubin E.M."/>
        </authorList>
    </citation>
    <scope>NUCLEOTIDE SEQUENCE [LARGE SCALE GENOMIC DNA]</scope>
</reference>
<reference key="4">
    <citation type="journal article" date="2004" name="Genome Res.">
        <title>The status, quality, and expansion of the NIH full-length cDNA project: the Mammalian Gene Collection (MGC).</title>
        <authorList>
            <consortium name="The MGC Project Team"/>
        </authorList>
    </citation>
    <scope>NUCLEOTIDE SEQUENCE [LARGE SCALE MRNA] (ISOFORMS 1 AND 2)</scope>
    <scope>VARIANTS CYS-267; ARG-592 AND ALA-710</scope>
    <source>
        <tissue>Brain</tissue>
    </source>
</reference>
<reference key="5">
    <citation type="journal article" date="2009" name="BMC Immunol.">
        <title>Identification of SH3 domain interaction partners of human FasL (CD178) by phage display screening.</title>
        <authorList>
            <person name="Voss M."/>
            <person name="Lettau M."/>
            <person name="Janssen O."/>
        </authorList>
    </citation>
    <scope>INTERACTION WITH FASLG</scope>
</reference>
<reference key="6">
    <citation type="journal article" date="2009" name="Chem. Biol.">
        <title>Docking motif-guided mapping of the interactome of protein phosphatase-1.</title>
        <authorList>
            <person name="Hendrickx A."/>
            <person name="Beullens M."/>
            <person name="Ceulemans H."/>
            <person name="Den Abt T."/>
            <person name="Van Eynde A."/>
            <person name="Nicolaescu E."/>
            <person name="Lesage B."/>
            <person name="Bollen M."/>
        </authorList>
    </citation>
    <scope>FUNCTION</scope>
    <scope>INTERACTION WITH PPP1CA</scope>
</reference>
<reference key="7">
    <citation type="journal article" date="2010" name="FEBS Lett.">
        <title>POSH2 is a RING finger E3 ligase with Rac1 binding activity through a partial CRIB domain.</title>
        <authorList>
            <person name="Kaerkkaeinen S."/>
            <person name="van der Linden M."/>
            <person name="Renkema G.H."/>
        </authorList>
    </citation>
    <scope>NOMENCLATURE</scope>
</reference>
<reference key="8">
    <citation type="journal article" date="2012" name="J. Biol. Chem.">
        <title>Sh3rf2/POSHER protein promotes cell survival by RING-mediated proteasomal degradation of the c-Jun N-terminal kinase scaffold POSH (Plenty of SH3s) protein.</title>
        <authorList>
            <person name="Wilhelm M."/>
            <person name="Kukekov N.V."/>
            <person name="Schmit T.L."/>
            <person name="Biagas K.V."/>
            <person name="Sproul A.A."/>
            <person name="Gire S."/>
            <person name="Maes M.E."/>
            <person name="Xu Z."/>
            <person name="Greene L.A."/>
        </authorList>
    </citation>
    <scope>FUNCTION AS AN E3 UBIQUITIN-PROTEIN LIGASE</scope>
</reference>
<reference key="9">
    <citation type="journal article" date="2014" name="Carcinogenesis">
        <title>SH3RF2 functions as an oncogene by mediating PAK4 protein stability.</title>
        <authorList>
            <person name="Kim T.W."/>
            <person name="Kang Y.K."/>
            <person name="Park Z.Y."/>
            <person name="Kim Y.H."/>
            <person name="Hong S.W."/>
            <person name="Oh S.J."/>
            <person name="Sohn H.A."/>
            <person name="Yang S.J."/>
            <person name="Jang Y.J."/>
            <person name="Lee D.C."/>
            <person name="Kim S.Y."/>
            <person name="Yoo H.S."/>
            <person name="Kim E."/>
            <person name="Yeom Y.I."/>
            <person name="Park K.C."/>
        </authorList>
    </citation>
    <scope>FUNCTION AS AN E3 UBIQUITIN-PROTEIN LIGASE</scope>
    <scope>CATALYTIC ACTIVITY</scope>
    <scope>SUBCELLULAR LOCATION</scope>
    <scope>TISSUE SPECIFICITY</scope>
    <scope>INTERACTION WITH PAK4 AND TNFRSF1A</scope>
    <scope>AUTOUBIQUITINATION</scope>
</reference>
<evidence type="ECO:0000250" key="1">
    <source>
        <dbReference type="UniProtKB" id="Q498M5"/>
    </source>
</evidence>
<evidence type="ECO:0000255" key="2">
    <source>
        <dbReference type="PROSITE-ProRule" id="PRU00175"/>
    </source>
</evidence>
<evidence type="ECO:0000255" key="3">
    <source>
        <dbReference type="PROSITE-ProRule" id="PRU00192"/>
    </source>
</evidence>
<evidence type="ECO:0000256" key="4">
    <source>
        <dbReference type="SAM" id="MobiDB-lite"/>
    </source>
</evidence>
<evidence type="ECO:0000269" key="5">
    <source>
    </source>
</evidence>
<evidence type="ECO:0000269" key="6">
    <source>
    </source>
</evidence>
<evidence type="ECO:0000269" key="7">
    <source>
    </source>
</evidence>
<evidence type="ECO:0000269" key="8">
    <source>
    </source>
</evidence>
<evidence type="ECO:0000269" key="9">
    <source>
    </source>
</evidence>
<evidence type="ECO:0000269" key="10">
    <source>
    </source>
</evidence>
<evidence type="ECO:0000269" key="11">
    <source>
    </source>
</evidence>
<evidence type="ECO:0000303" key="12">
    <source>
    </source>
</evidence>
<evidence type="ECO:0000303" key="13">
    <source>
    </source>
</evidence>
<evidence type="ECO:0000303" key="14">
    <source>
    </source>
</evidence>
<evidence type="ECO:0000303" key="15">
    <source>
    </source>
</evidence>
<evidence type="ECO:0000303" key="16">
    <source>
    </source>
</evidence>
<evidence type="ECO:0000305" key="17"/>
<name>SH3R2_HUMAN</name>
<accession>Q8TEC5</accession>
<accession>A8K961</accession>
<accession>Q08AM9</accession>
<accession>Q6GMR9</accession>
<accession>Q8N5S8</accession>
<accession>Q96LP8</accession>
<sequence length="729" mass="79320">MDDLTLLDLLECPVCFEKLDVTAKVLPCQHTFCKPCLQRVFKAHKELRCPECRTPVFSNIEALPANLLLVRLLDGVRSGQSSGRGGSFRRPGTMTLQDGRKSRTNPRRLQASPFRLVPNVRIHMDGVPRAKALCNYRGQNPGDLRFNKGDIILLRRQLDENWYQGEINGISGNFPASSVEVIKQLPQPPPLCRALYNFDLRGKDKSENQDCLTFLKDDIITVISRVDENWAEGKLGDKVGIFPILFVEPNLTARHLLEKNKGRQSSRTKNLSLVSSSSRGNTSTLRRGPGSRRKVPGQFSITTALNTLNRMVHSPSGRHMVEISTPVLISSSNPSVITQPMEKADVPSSCVGQVSTYHPAPVSPGHSTAVVSLPGSQQHLSANMFVALHSYSAHGPDELDLQKGEGVRVLGKCQDGWLRGVSLVTGRVGIFPNNYVIPIFRKTSSFPDSRSPGLYTTWTLSTSSVSSQGSISEGDPRQSRPFKSVFVPTAIVNPVRSTAGPGTLGQGSLRKGRSSMRKNGSLQRPLQSGIPTLVVGSLRRSPTMVLRPQQFQFYQPQGIPSSPSAVVVEMGSKPALTGEPALTCISRGSEAWIHSAASSLIMEDKEIPIKSEPLPKPPASAPPSILVKPENSRNGIEKQVKTVRFQNYSPPPTKHYTSHPTSGKPEQPATLKASQPEAASLGPEMTVLFAHRSGCHSGQQTDLRRKSALGKATTLVSTASGTQTVFPSK</sequence>
<proteinExistence type="evidence at protein level"/>
<comment type="function">
    <text evidence="7 9 10 11">Has E3 ubiquitin-protein ligase activity (PubMed:24130170). Acts as an anti-apoptotic regulator of the JNK pathway by ubiquitinating and promoting the degradation of SH3RF1, a scaffold protein that is required for pro-apoptotic JNK activation (PubMed:22128169). Facilitates TNF-alpha-mediated recruitment of adapter proteins TRADD and RIPK1 to TNFRSF1A and regulates PAK4 protein stability via inhibition of its ubiquitin-mediated proteasomal degradation (PubMed:24130170). Inhibits PPP1CA phosphatase activity (PubMed:19389623, PubMed:19945436).</text>
</comment>
<comment type="catalytic activity">
    <reaction evidence="11">
        <text>S-ubiquitinyl-[E2 ubiquitin-conjugating enzyme]-L-cysteine + [acceptor protein]-L-lysine = [E2 ubiquitin-conjugating enzyme]-L-cysteine + N(6)-ubiquitinyl-[acceptor protein]-L-lysine.</text>
        <dbReference type="EC" id="2.3.2.27"/>
    </reaction>
</comment>
<comment type="pathway">
    <text>Protein modification; protein ubiquitination.</text>
</comment>
<comment type="subunit">
    <text evidence="1 7 8 9 11">Interacts with FASLG and PPP1CA (PubMed:19389623, PubMed:19807924, PubMed:19945436). Interacts with PAK4 and TNFRSF1A (PubMed:24130170). Interacts with DLK1, MAP3K10/MLK2, MAPK8IP1/JIP1, MAPK8IP2/JIP2 and MAPK8IP3/JIP3. Interacts with RAC1 (both active GTP- or inactive GDP-bound forms) (By similarity).</text>
</comment>
<comment type="interaction">
    <interactant intactId="EBI-2130111">
        <id>Q8TEC5</id>
    </interactant>
    <interactant intactId="EBI-357530">
        <id>Q9ULX6</id>
        <label>AKAP8L</label>
    </interactant>
    <organismsDiffer>false</organismsDiffer>
    <experiments>3</experiments>
</comment>
<comment type="interaction">
    <interactant intactId="EBI-2130111">
        <id>Q8TEC5</id>
    </interactant>
    <interactant intactId="EBI-746752">
        <id>Q9Y2J4</id>
        <label>AMOTL2</label>
    </interactant>
    <organismsDiffer>false</organismsDiffer>
    <experiments>4</experiments>
</comment>
<comment type="interaction">
    <interactant intactId="EBI-2130111">
        <id>Q8TEC5</id>
    </interactant>
    <interactant intactId="EBI-2949658">
        <id>O95429</id>
        <label>BAG4</label>
    </interactant>
    <organismsDiffer>false</organismsDiffer>
    <experiments>3</experiments>
</comment>
<comment type="interaction">
    <interactant intactId="EBI-2130111">
        <id>Q8TEC5</id>
    </interactant>
    <interactant intactId="EBI-744695">
        <id>Q8N9N5</id>
        <label>BANP</label>
    </interactant>
    <organismsDiffer>false</organismsDiffer>
    <experiments>3</experiments>
</comment>
<comment type="interaction">
    <interactant intactId="EBI-2130111">
        <id>Q8TEC5</id>
    </interactant>
    <interactant intactId="EBI-10171570">
        <id>Q68D86</id>
        <label>CCDC102B</label>
    </interactant>
    <organismsDiffer>false</organismsDiffer>
    <experiments>3</experiments>
</comment>
<comment type="interaction">
    <interactant intactId="EBI-2130111">
        <id>Q8TEC5</id>
    </interactant>
    <interactant intactId="EBI-3867333">
        <id>A8MQ03</id>
        <label>CYSRT1</label>
    </interactant>
    <organismsDiffer>false</organismsDiffer>
    <experiments>3</experiments>
</comment>
<comment type="interaction">
    <interactant intactId="EBI-2130111">
        <id>Q8TEC5</id>
    </interactant>
    <interactant intactId="EBI-11525448">
        <id>O43281-2</id>
        <label>EFS</label>
    </interactant>
    <organismsDiffer>false</organismsDiffer>
    <experiments>3</experiments>
</comment>
<comment type="interaction">
    <interactant intactId="EBI-2130111">
        <id>Q8TEC5</id>
    </interactant>
    <interactant intactId="EBI-618309">
        <id>Q08379</id>
        <label>GOLGA2</label>
    </interactant>
    <organismsDiffer>false</organismsDiffer>
    <experiments>4</experiments>
</comment>
<comment type="interaction">
    <interactant intactId="EBI-2130111">
        <id>Q8TEC5</id>
    </interactant>
    <interactant intactId="EBI-11522433">
        <id>Q5JR59-3</id>
        <label>MTUS2</label>
    </interactant>
    <organismsDiffer>false</organismsDiffer>
    <experiments>4</experiments>
</comment>
<comment type="interaction">
    <interactant intactId="EBI-2130111">
        <id>Q8TEC5</id>
    </interactant>
    <interactant intactId="EBI-11750983">
        <id>Q9HC98-4</id>
        <label>NEK6</label>
    </interactant>
    <organismsDiffer>false</organismsDiffer>
    <experiments>3</experiments>
</comment>
<comment type="interaction">
    <interactant intactId="EBI-2130111">
        <id>Q8TEC5</id>
    </interactant>
    <interactant intactId="EBI-357253">
        <id>P62136</id>
        <label>PPP1CA</label>
    </interactant>
    <organismsDiffer>false</organismsDiffer>
    <experiments>3</experiments>
</comment>
<comment type="interaction">
    <interactant intactId="EBI-2130111">
        <id>Q8TEC5</id>
    </interactant>
    <interactant intactId="EBI-2559305">
        <id>A5D8V6</id>
        <label>VPS37C</label>
    </interactant>
    <organismsDiffer>false</organismsDiffer>
    <experiments>3</experiments>
</comment>
<comment type="subcellular location">
    <subcellularLocation>
        <location evidence="11">Nucleus</location>
    </subcellularLocation>
</comment>
<comment type="alternative products">
    <event type="alternative splicing"/>
    <isoform>
        <id>Q8TEC5-1</id>
        <name>1</name>
        <sequence type="displayed"/>
    </isoform>
    <isoform>
        <id>Q8TEC5-2</id>
        <name>2</name>
        <sequence type="described" ref="VSP_022058 VSP_022059"/>
    </isoform>
    <isoform>
        <id>Q8TEC5-3</id>
        <name>3</name>
        <sequence type="described" ref="VSP_040662"/>
    </isoform>
</comment>
<comment type="tissue specificity">
    <text evidence="9 11">Heart (at protein level). Up-regulated in colon cancer tissues as compared to normal colon tissues (at protein level). Testis. In the heart, present in the apex, left atrium, right atrium, left ventricle and right ventricle, but not in the aorta.</text>
</comment>
<comment type="domain">
    <text evidence="11">The RING finger domain is required for ubiquitin ligase activity and autoubiquitination.</text>
</comment>
<comment type="PTM">
    <text evidence="11">Autoubiquitinated.</text>
</comment>
<comment type="similarity">
    <text evidence="17">Belongs to the SH3RF family.</text>
</comment>
<comment type="sequence caution" evidence="17">
    <conflict type="erroneous initiation">
        <sequence resource="EMBL-CDS" id="AAH31650"/>
    </conflict>
    <text>Extended N-terminus.</text>
</comment>
<comment type="sequence caution" evidence="17">
    <conflict type="erroneous termination">
        <sequence resource="EMBL-CDS" id="BAB85025"/>
    </conflict>
    <text>Truncated C-terminus.</text>
</comment>
<gene>
    <name type="primary">SH3RF2</name>
    <name evidence="15" type="synonym">POSH3</name>
    <name evidence="16" type="synonym">POSHER</name>
    <name type="synonym">PPP1R39</name>
    <name type="synonym">RNF158</name>
</gene>
<organism>
    <name type="scientific">Homo sapiens</name>
    <name type="common">Human</name>
    <dbReference type="NCBI Taxonomy" id="9606"/>
    <lineage>
        <taxon>Eukaryota</taxon>
        <taxon>Metazoa</taxon>
        <taxon>Chordata</taxon>
        <taxon>Craniata</taxon>
        <taxon>Vertebrata</taxon>
        <taxon>Euteleostomi</taxon>
        <taxon>Mammalia</taxon>
        <taxon>Eutheria</taxon>
        <taxon>Euarchontoglires</taxon>
        <taxon>Primates</taxon>
        <taxon>Haplorrhini</taxon>
        <taxon>Catarrhini</taxon>
        <taxon>Hominidae</taxon>
        <taxon>Homo</taxon>
    </lineage>
</organism>